<sequence>MSKILVFGHQNPDTDAIASSYAFDYLSQKAFGLDTEVVALGTPNEETAFALDYFGVEAPRVVESAKAQGSEQVILTDHNEFQQSIADIREVEVYGVVDHHRVANFETANPLYMRVEPVGSASSIVYRMFKENGIEVPKAIAGMLLSGLISDTLLLKSPTTHVSDHLVAEELAELAEVNLEDYGMALLKAGTNLASKSEVELIGIDAKTFELNGNAVRVAQVNTVDIAEVLERQEAIEAAIKDAMAAEGYSDFVLMITDIVNSNSEILAIGANMDKVEAAFNFTLDNNHAFLAGAVSRKKQVVPQLTESFGA</sequence>
<comment type="catalytic activity">
    <reaction evidence="1">
        <text>diphosphate + H2O = 2 phosphate + H(+)</text>
        <dbReference type="Rhea" id="RHEA:24576"/>
        <dbReference type="ChEBI" id="CHEBI:15377"/>
        <dbReference type="ChEBI" id="CHEBI:15378"/>
        <dbReference type="ChEBI" id="CHEBI:33019"/>
        <dbReference type="ChEBI" id="CHEBI:43474"/>
        <dbReference type="EC" id="3.6.1.1"/>
    </reaction>
</comment>
<comment type="cofactor">
    <cofactor evidence="1">
        <name>Mn(2+)</name>
        <dbReference type="ChEBI" id="CHEBI:29035"/>
    </cofactor>
    <text evidence="1">Binds 2 manganese ions per subunit.</text>
</comment>
<comment type="subcellular location">
    <subcellularLocation>
        <location evidence="1">Cytoplasm</location>
    </subcellularLocation>
</comment>
<comment type="similarity">
    <text evidence="1">Belongs to the PPase class C family.</text>
</comment>
<comment type="sequence caution" evidence="2">
    <conflict type="erroneous initiation">
        <sequence resource="EMBL-CDS" id="AAT86480"/>
    </conflict>
</comment>
<protein>
    <recommendedName>
        <fullName evidence="1">Probable manganese-dependent inorganic pyrophosphatase</fullName>
        <ecNumber evidence="1">3.6.1.1</ecNumber>
    </recommendedName>
    <alternativeName>
        <fullName evidence="1">Pyrophosphate phospho-hydrolase</fullName>
        <shortName evidence="1">PPase</shortName>
    </alternativeName>
</protein>
<evidence type="ECO:0000255" key="1">
    <source>
        <dbReference type="HAMAP-Rule" id="MF_00207"/>
    </source>
</evidence>
<evidence type="ECO:0000305" key="2"/>
<keyword id="KW-0963">Cytoplasm</keyword>
<keyword id="KW-0378">Hydrolase</keyword>
<keyword id="KW-0464">Manganese</keyword>
<keyword id="KW-0479">Metal-binding</keyword>
<proteinExistence type="inferred from homology"/>
<reference key="1">
    <citation type="journal article" date="2004" name="J. Infect. Dis.">
        <title>Progress toward characterization of the group A Streptococcus metagenome: complete genome sequence of a macrolide-resistant serotype M6 strain.</title>
        <authorList>
            <person name="Banks D.J."/>
            <person name="Porcella S.F."/>
            <person name="Barbian K.D."/>
            <person name="Beres S.B."/>
            <person name="Philips L.E."/>
            <person name="Voyich J.M."/>
            <person name="DeLeo F.R."/>
            <person name="Martin J.M."/>
            <person name="Somerville G.A."/>
            <person name="Musser J.M."/>
        </authorList>
    </citation>
    <scope>NUCLEOTIDE SEQUENCE [LARGE SCALE GENOMIC DNA]</scope>
    <source>
        <strain>ATCC BAA-946 / MGAS10394</strain>
    </source>
</reference>
<gene>
    <name evidence="1" type="primary">ppaC</name>
    <name type="ordered locus">M6_Spy0345</name>
</gene>
<feature type="chain" id="PRO_0000158595" description="Probable manganese-dependent inorganic pyrophosphatase">
    <location>
        <begin position="1"/>
        <end position="311"/>
    </location>
</feature>
<feature type="binding site" evidence="1">
    <location>
        <position position="9"/>
    </location>
    <ligand>
        <name>Mn(2+)</name>
        <dbReference type="ChEBI" id="CHEBI:29035"/>
        <label>1</label>
    </ligand>
</feature>
<feature type="binding site" evidence="1">
    <location>
        <position position="13"/>
    </location>
    <ligand>
        <name>Mn(2+)</name>
        <dbReference type="ChEBI" id="CHEBI:29035"/>
        <label>1</label>
    </ligand>
</feature>
<feature type="binding site" evidence="1">
    <location>
        <position position="15"/>
    </location>
    <ligand>
        <name>Mn(2+)</name>
        <dbReference type="ChEBI" id="CHEBI:29035"/>
        <label>2</label>
    </ligand>
</feature>
<feature type="binding site" evidence="1">
    <location>
        <position position="77"/>
    </location>
    <ligand>
        <name>Mn(2+)</name>
        <dbReference type="ChEBI" id="CHEBI:29035"/>
        <label>1</label>
    </ligand>
</feature>
<feature type="binding site" evidence="1">
    <location>
        <position position="77"/>
    </location>
    <ligand>
        <name>Mn(2+)</name>
        <dbReference type="ChEBI" id="CHEBI:29035"/>
        <label>2</label>
    </ligand>
</feature>
<feature type="binding site" evidence="1">
    <location>
        <position position="99"/>
    </location>
    <ligand>
        <name>Mn(2+)</name>
        <dbReference type="ChEBI" id="CHEBI:29035"/>
        <label>2</label>
    </ligand>
</feature>
<feature type="binding site" evidence="1">
    <location>
        <position position="151"/>
    </location>
    <ligand>
        <name>Mn(2+)</name>
        <dbReference type="ChEBI" id="CHEBI:29035"/>
        <label>2</label>
    </ligand>
</feature>
<accession>Q5XDN3</accession>
<name>PPAC_STRP6</name>
<dbReference type="EC" id="3.6.1.1" evidence="1"/>
<dbReference type="EMBL" id="CP000003">
    <property type="protein sequence ID" value="AAT86480.1"/>
    <property type="status" value="ALT_INIT"/>
    <property type="molecule type" value="Genomic_DNA"/>
</dbReference>
<dbReference type="RefSeq" id="WP_002990948.1">
    <property type="nucleotide sequence ID" value="NC_006086.1"/>
</dbReference>
<dbReference type="SMR" id="Q5XDN3"/>
<dbReference type="KEGG" id="spa:M6_Spy0345"/>
<dbReference type="HOGENOM" id="CLU_025243_0_1_9"/>
<dbReference type="Proteomes" id="UP000001167">
    <property type="component" value="Chromosome"/>
</dbReference>
<dbReference type="GO" id="GO:0005737">
    <property type="term" value="C:cytoplasm"/>
    <property type="evidence" value="ECO:0007669"/>
    <property type="project" value="UniProtKB-SubCell"/>
</dbReference>
<dbReference type="GO" id="GO:0004427">
    <property type="term" value="F:inorganic diphosphate phosphatase activity"/>
    <property type="evidence" value="ECO:0007669"/>
    <property type="project" value="UniProtKB-UniRule"/>
</dbReference>
<dbReference type="GO" id="GO:0030145">
    <property type="term" value="F:manganese ion binding"/>
    <property type="evidence" value="ECO:0007669"/>
    <property type="project" value="UniProtKB-UniRule"/>
</dbReference>
<dbReference type="FunFam" id="3.10.310.20:FF:000001">
    <property type="entry name" value="Probable manganese-dependent inorganic pyrophosphatase"/>
    <property type="match status" value="1"/>
</dbReference>
<dbReference type="FunFam" id="3.90.1640.10:FF:000001">
    <property type="entry name" value="Probable manganese-dependent inorganic pyrophosphatase"/>
    <property type="match status" value="1"/>
</dbReference>
<dbReference type="Gene3D" id="3.10.310.20">
    <property type="entry name" value="DHHA2 domain"/>
    <property type="match status" value="1"/>
</dbReference>
<dbReference type="Gene3D" id="3.90.1640.10">
    <property type="entry name" value="inorganic pyrophosphatase (n-terminal core)"/>
    <property type="match status" value="1"/>
</dbReference>
<dbReference type="HAMAP" id="MF_00207">
    <property type="entry name" value="PPase_C"/>
    <property type="match status" value="1"/>
</dbReference>
<dbReference type="InterPro" id="IPR001667">
    <property type="entry name" value="DDH_dom"/>
</dbReference>
<dbReference type="InterPro" id="IPR038763">
    <property type="entry name" value="DHH_sf"/>
</dbReference>
<dbReference type="InterPro" id="IPR004097">
    <property type="entry name" value="DHHA2"/>
</dbReference>
<dbReference type="InterPro" id="IPR038222">
    <property type="entry name" value="DHHA2_dom_sf"/>
</dbReference>
<dbReference type="InterPro" id="IPR022934">
    <property type="entry name" value="Mn-dep_inorganic_PyrPase"/>
</dbReference>
<dbReference type="InterPro" id="IPR051319">
    <property type="entry name" value="Oligoribo/pAp-PDE_c-di-AMP_PDE"/>
</dbReference>
<dbReference type="NCBIfam" id="NF003877">
    <property type="entry name" value="PRK05427.1"/>
    <property type="match status" value="1"/>
</dbReference>
<dbReference type="PANTHER" id="PTHR47618">
    <property type="entry name" value="BIFUNCTIONAL OLIGORIBONUCLEASE AND PAP PHOSPHATASE NRNA"/>
    <property type="match status" value="1"/>
</dbReference>
<dbReference type="PANTHER" id="PTHR47618:SF1">
    <property type="entry name" value="BIFUNCTIONAL OLIGORIBONUCLEASE AND PAP PHOSPHATASE NRNA"/>
    <property type="match status" value="1"/>
</dbReference>
<dbReference type="Pfam" id="PF01368">
    <property type="entry name" value="DHH"/>
    <property type="match status" value="1"/>
</dbReference>
<dbReference type="Pfam" id="PF02833">
    <property type="entry name" value="DHHA2"/>
    <property type="match status" value="1"/>
</dbReference>
<dbReference type="SMART" id="SM01131">
    <property type="entry name" value="DHHA2"/>
    <property type="match status" value="1"/>
</dbReference>
<dbReference type="SUPFAM" id="SSF64182">
    <property type="entry name" value="DHH phosphoesterases"/>
    <property type="match status" value="1"/>
</dbReference>
<organism>
    <name type="scientific">Streptococcus pyogenes serotype M6 (strain ATCC BAA-946 / MGAS10394)</name>
    <dbReference type="NCBI Taxonomy" id="286636"/>
    <lineage>
        <taxon>Bacteria</taxon>
        <taxon>Bacillati</taxon>
        <taxon>Bacillota</taxon>
        <taxon>Bacilli</taxon>
        <taxon>Lactobacillales</taxon>
        <taxon>Streptococcaceae</taxon>
        <taxon>Streptococcus</taxon>
    </lineage>
</organism>